<gene>
    <name type="primary">ssb</name>
    <name type="ordered locus">SMU_1859</name>
</gene>
<proteinExistence type="inferred from homology"/>
<sequence length="164" mass="18332">MINNVVLVGRMTRDAELRYTPSNQAVATFTLAVNRNFKNQNGEREADFINIVIWRQQAENLANWAKKGTLLGITGRIQTRNYENQQGQRVYVTEVVADNFQILESRATREGQSNSYNAGGNNNFGGNNFSSQGSSQSQTPNFARDESPFGDSNPMDISDDDLPF</sequence>
<name>SSB_STRMU</name>
<dbReference type="EMBL" id="AE014133">
    <property type="protein sequence ID" value="AAN59480.1"/>
    <property type="molecule type" value="Genomic_DNA"/>
</dbReference>
<dbReference type="RefSeq" id="NP_722174.1">
    <property type="nucleotide sequence ID" value="NC_004350.2"/>
</dbReference>
<dbReference type="RefSeq" id="WP_002261867.1">
    <property type="nucleotide sequence ID" value="NC_004350.2"/>
</dbReference>
<dbReference type="SMR" id="Q8DSD8"/>
<dbReference type="STRING" id="210007.SMU_1859"/>
<dbReference type="KEGG" id="smu:SMU_1859"/>
<dbReference type="PATRIC" id="fig|210007.7.peg.1660"/>
<dbReference type="eggNOG" id="COG0629">
    <property type="taxonomic scope" value="Bacteria"/>
</dbReference>
<dbReference type="HOGENOM" id="CLU_078758_6_2_9"/>
<dbReference type="OrthoDB" id="9809878at2"/>
<dbReference type="PhylomeDB" id="Q8DSD8"/>
<dbReference type="Proteomes" id="UP000002512">
    <property type="component" value="Chromosome"/>
</dbReference>
<dbReference type="GO" id="GO:0009295">
    <property type="term" value="C:nucleoid"/>
    <property type="evidence" value="ECO:0007669"/>
    <property type="project" value="TreeGrafter"/>
</dbReference>
<dbReference type="GO" id="GO:0003697">
    <property type="term" value="F:single-stranded DNA binding"/>
    <property type="evidence" value="ECO:0007669"/>
    <property type="project" value="UniProtKB-UniRule"/>
</dbReference>
<dbReference type="GO" id="GO:0006310">
    <property type="term" value="P:DNA recombination"/>
    <property type="evidence" value="ECO:0007669"/>
    <property type="project" value="UniProtKB-UniRule"/>
</dbReference>
<dbReference type="GO" id="GO:0006281">
    <property type="term" value="P:DNA repair"/>
    <property type="evidence" value="ECO:0007669"/>
    <property type="project" value="UniProtKB-UniRule"/>
</dbReference>
<dbReference type="GO" id="GO:0006260">
    <property type="term" value="P:DNA replication"/>
    <property type="evidence" value="ECO:0007669"/>
    <property type="project" value="UniProtKB-UniRule"/>
</dbReference>
<dbReference type="CDD" id="cd04496">
    <property type="entry name" value="SSB_OBF"/>
    <property type="match status" value="1"/>
</dbReference>
<dbReference type="FunFam" id="2.40.50.140:FF:000084">
    <property type="entry name" value="Single-stranded DNA-binding protein"/>
    <property type="match status" value="1"/>
</dbReference>
<dbReference type="Gene3D" id="2.40.50.140">
    <property type="entry name" value="Nucleic acid-binding proteins"/>
    <property type="match status" value="1"/>
</dbReference>
<dbReference type="HAMAP" id="MF_00984">
    <property type="entry name" value="SSB"/>
    <property type="match status" value="1"/>
</dbReference>
<dbReference type="InterPro" id="IPR012340">
    <property type="entry name" value="NA-bd_OB-fold"/>
</dbReference>
<dbReference type="InterPro" id="IPR000424">
    <property type="entry name" value="Primosome_PriB/ssb"/>
</dbReference>
<dbReference type="InterPro" id="IPR011344">
    <property type="entry name" value="ssDNA-bd"/>
</dbReference>
<dbReference type="NCBIfam" id="NF005580">
    <property type="entry name" value="PRK07275.1"/>
    <property type="match status" value="1"/>
</dbReference>
<dbReference type="NCBIfam" id="TIGR00621">
    <property type="entry name" value="ssb"/>
    <property type="match status" value="1"/>
</dbReference>
<dbReference type="PANTHER" id="PTHR10302">
    <property type="entry name" value="SINGLE-STRANDED DNA-BINDING PROTEIN"/>
    <property type="match status" value="1"/>
</dbReference>
<dbReference type="PANTHER" id="PTHR10302:SF27">
    <property type="entry name" value="SINGLE-STRANDED DNA-BINDING PROTEIN"/>
    <property type="match status" value="1"/>
</dbReference>
<dbReference type="Pfam" id="PF00436">
    <property type="entry name" value="SSB"/>
    <property type="match status" value="1"/>
</dbReference>
<dbReference type="PIRSF" id="PIRSF002070">
    <property type="entry name" value="SSB"/>
    <property type="match status" value="1"/>
</dbReference>
<dbReference type="SUPFAM" id="SSF50249">
    <property type="entry name" value="Nucleic acid-binding proteins"/>
    <property type="match status" value="1"/>
</dbReference>
<dbReference type="PROSITE" id="PS50935">
    <property type="entry name" value="SSB"/>
    <property type="match status" value="1"/>
</dbReference>
<organism>
    <name type="scientific">Streptococcus mutans serotype c (strain ATCC 700610 / UA159)</name>
    <dbReference type="NCBI Taxonomy" id="210007"/>
    <lineage>
        <taxon>Bacteria</taxon>
        <taxon>Bacillati</taxon>
        <taxon>Bacillota</taxon>
        <taxon>Bacilli</taxon>
        <taxon>Lactobacillales</taxon>
        <taxon>Streptococcaceae</taxon>
        <taxon>Streptococcus</taxon>
    </lineage>
</organism>
<evidence type="ECO:0000255" key="1">
    <source>
        <dbReference type="HAMAP-Rule" id="MF_00984"/>
    </source>
</evidence>
<evidence type="ECO:0000256" key="2">
    <source>
        <dbReference type="SAM" id="MobiDB-lite"/>
    </source>
</evidence>
<reference key="1">
    <citation type="journal article" date="2002" name="Proc. Natl. Acad. Sci. U.S.A.">
        <title>Genome sequence of Streptococcus mutans UA159, a cariogenic dental pathogen.</title>
        <authorList>
            <person name="Ajdic D.J."/>
            <person name="McShan W.M."/>
            <person name="McLaughlin R.E."/>
            <person name="Savic G."/>
            <person name="Chang J."/>
            <person name="Carson M.B."/>
            <person name="Primeaux C."/>
            <person name="Tian R."/>
            <person name="Kenton S."/>
            <person name="Jia H.G."/>
            <person name="Lin S.P."/>
            <person name="Qian Y."/>
            <person name="Li S."/>
            <person name="Zhu H."/>
            <person name="Najar F.Z."/>
            <person name="Lai H."/>
            <person name="White J."/>
            <person name="Roe B.A."/>
            <person name="Ferretti J.J."/>
        </authorList>
    </citation>
    <scope>NUCLEOTIDE SEQUENCE [LARGE SCALE GENOMIC DNA]</scope>
    <source>
        <strain>ATCC 700610 / UA159</strain>
    </source>
</reference>
<accession>Q8DSD8</accession>
<comment type="function">
    <text evidence="1">Plays an important role in DNA replication, recombination and repair. Binds to ssDNA and to an array of partner proteins to recruit them to their sites of action during DNA metabolism.</text>
</comment>
<comment type="subunit">
    <text evidence="1">Homotetramer.</text>
</comment>
<protein>
    <recommendedName>
        <fullName evidence="1">Single-stranded DNA-binding protein</fullName>
        <shortName evidence="1">SSB</shortName>
    </recommendedName>
</protein>
<keyword id="KW-0227">DNA damage</keyword>
<keyword id="KW-0233">DNA recombination</keyword>
<keyword id="KW-0234">DNA repair</keyword>
<keyword id="KW-0235">DNA replication</keyword>
<keyword id="KW-0238">DNA-binding</keyword>
<keyword id="KW-1185">Reference proteome</keyword>
<feature type="chain" id="PRO_0000096117" description="Single-stranded DNA-binding protein">
    <location>
        <begin position="1"/>
        <end position="164"/>
    </location>
</feature>
<feature type="domain" description="SSB" evidence="1">
    <location>
        <begin position="1"/>
        <end position="104"/>
    </location>
</feature>
<feature type="region of interest" description="Disordered" evidence="2">
    <location>
        <begin position="111"/>
        <end position="164"/>
    </location>
</feature>
<feature type="short sequence motif" description="Important for interaction with partner proteins" evidence="1">
    <location>
        <begin position="159"/>
        <end position="164"/>
    </location>
</feature>
<feature type="compositionally biased region" description="Low complexity" evidence="2">
    <location>
        <begin position="111"/>
        <end position="138"/>
    </location>
</feature>